<protein>
    <recommendedName>
        <fullName>Pyruvate kinase 1</fullName>
        <shortName>PK 1</shortName>
        <ecNumber>2.7.1.40</ecNumber>
    </recommendedName>
</protein>
<evidence type="ECO:0000250" key="1"/>
<evidence type="ECO:0000250" key="2">
    <source>
        <dbReference type="UniProtKB" id="P14618"/>
    </source>
</evidence>
<evidence type="ECO:0000255" key="3"/>
<evidence type="ECO:0000305" key="4"/>
<evidence type="ECO:0007829" key="5">
    <source>
        <dbReference type="PDB" id="4HYV"/>
    </source>
</evidence>
<evidence type="ECO:0007829" key="6">
    <source>
        <dbReference type="PDB" id="4KCT"/>
    </source>
</evidence>
<keyword id="KW-0002">3D-structure</keyword>
<keyword id="KW-0021">Allosteric enzyme</keyword>
<keyword id="KW-0067">ATP-binding</keyword>
<keyword id="KW-0324">Glycolysis</keyword>
<keyword id="KW-0418">Kinase</keyword>
<keyword id="KW-0460">Magnesium</keyword>
<keyword id="KW-0479">Metal-binding</keyword>
<keyword id="KW-0547">Nucleotide-binding</keyword>
<keyword id="KW-0630">Potassium</keyword>
<keyword id="KW-0670">Pyruvate</keyword>
<keyword id="KW-0808">Transferase</keyword>
<dbReference type="EC" id="2.7.1.40"/>
<dbReference type="EMBL" id="X57950">
    <property type="protein sequence ID" value="CAA41018.1"/>
    <property type="molecule type" value="Genomic_DNA"/>
</dbReference>
<dbReference type="PIR" id="S17648">
    <property type="entry name" value="S17648"/>
</dbReference>
<dbReference type="PDB" id="4HYV">
    <property type="method" value="X-ray"/>
    <property type="resolution" value="2.30 A"/>
    <property type="chains" value="A/B=1-499"/>
</dbReference>
<dbReference type="PDB" id="4HYW">
    <property type="method" value="X-ray"/>
    <property type="resolution" value="2.35 A"/>
    <property type="chains" value="A/B=1-499"/>
</dbReference>
<dbReference type="PDB" id="4KCT">
    <property type="method" value="X-ray"/>
    <property type="resolution" value="1.95 A"/>
    <property type="chains" value="A/B=1-499"/>
</dbReference>
<dbReference type="PDB" id="4KCU">
    <property type="method" value="X-ray"/>
    <property type="resolution" value="2.35 A"/>
    <property type="chains" value="A/B=1-499"/>
</dbReference>
<dbReference type="PDB" id="4KCV">
    <property type="method" value="X-ray"/>
    <property type="resolution" value="2.18 A"/>
    <property type="chains" value="A/B=1-499"/>
</dbReference>
<dbReference type="PDB" id="4KCW">
    <property type="method" value="X-ray"/>
    <property type="resolution" value="2.50 A"/>
    <property type="chains" value="A/B=1-499"/>
</dbReference>
<dbReference type="PDBsum" id="4HYV"/>
<dbReference type="PDBsum" id="4HYW"/>
<dbReference type="PDBsum" id="4KCT"/>
<dbReference type="PDBsum" id="4KCU"/>
<dbReference type="PDBsum" id="4KCV"/>
<dbReference type="PDBsum" id="4KCW"/>
<dbReference type="SMR" id="P30615"/>
<dbReference type="BRENDA" id="2.7.1.40">
    <property type="organism ID" value="6520"/>
</dbReference>
<dbReference type="SABIO-RK" id="P30615"/>
<dbReference type="UniPathway" id="UPA00109">
    <property type="reaction ID" value="UER00188"/>
</dbReference>
<dbReference type="EvolutionaryTrace" id="P30615"/>
<dbReference type="GO" id="GO:0005524">
    <property type="term" value="F:ATP binding"/>
    <property type="evidence" value="ECO:0007669"/>
    <property type="project" value="UniProtKB-KW"/>
</dbReference>
<dbReference type="GO" id="GO:0016301">
    <property type="term" value="F:kinase activity"/>
    <property type="evidence" value="ECO:0007669"/>
    <property type="project" value="UniProtKB-KW"/>
</dbReference>
<dbReference type="GO" id="GO:0000287">
    <property type="term" value="F:magnesium ion binding"/>
    <property type="evidence" value="ECO:0007669"/>
    <property type="project" value="InterPro"/>
</dbReference>
<dbReference type="GO" id="GO:0030955">
    <property type="term" value="F:potassium ion binding"/>
    <property type="evidence" value="ECO:0007669"/>
    <property type="project" value="InterPro"/>
</dbReference>
<dbReference type="GO" id="GO:0004743">
    <property type="term" value="F:pyruvate kinase activity"/>
    <property type="evidence" value="ECO:0007669"/>
    <property type="project" value="UniProtKB-EC"/>
</dbReference>
<dbReference type="CDD" id="cd00288">
    <property type="entry name" value="Pyruvate_Kinase"/>
    <property type="match status" value="1"/>
</dbReference>
<dbReference type="FunFam" id="2.40.33.10:FF:000001">
    <property type="entry name" value="Pyruvate kinase"/>
    <property type="match status" value="1"/>
</dbReference>
<dbReference type="FunFam" id="3.20.20.60:FF:000025">
    <property type="entry name" value="Pyruvate kinase"/>
    <property type="match status" value="1"/>
</dbReference>
<dbReference type="FunFam" id="3.40.1380.20:FF:000024">
    <property type="entry name" value="Pyruvate kinase"/>
    <property type="match status" value="1"/>
</dbReference>
<dbReference type="Gene3D" id="3.20.20.60">
    <property type="entry name" value="Phosphoenolpyruvate-binding domains"/>
    <property type="match status" value="1"/>
</dbReference>
<dbReference type="Gene3D" id="2.40.33.10">
    <property type="entry name" value="PK beta-barrel domain-like"/>
    <property type="match status" value="1"/>
</dbReference>
<dbReference type="Gene3D" id="3.40.1380.20">
    <property type="entry name" value="Pyruvate kinase, C-terminal domain"/>
    <property type="match status" value="1"/>
</dbReference>
<dbReference type="InterPro" id="IPR001697">
    <property type="entry name" value="Pyr_Knase"/>
</dbReference>
<dbReference type="InterPro" id="IPR015813">
    <property type="entry name" value="Pyrv/PenolPyrv_kinase-like_dom"/>
</dbReference>
<dbReference type="InterPro" id="IPR040442">
    <property type="entry name" value="Pyrv_kinase-like_dom_sf"/>
</dbReference>
<dbReference type="InterPro" id="IPR011037">
    <property type="entry name" value="Pyrv_Knase-like_insert_dom_sf"/>
</dbReference>
<dbReference type="InterPro" id="IPR018209">
    <property type="entry name" value="Pyrv_Knase_AS"/>
</dbReference>
<dbReference type="InterPro" id="IPR015793">
    <property type="entry name" value="Pyrv_Knase_brl"/>
</dbReference>
<dbReference type="InterPro" id="IPR015795">
    <property type="entry name" value="Pyrv_Knase_C"/>
</dbReference>
<dbReference type="InterPro" id="IPR036918">
    <property type="entry name" value="Pyrv_Knase_C_sf"/>
</dbReference>
<dbReference type="InterPro" id="IPR015806">
    <property type="entry name" value="Pyrv_Knase_insert_dom_sf"/>
</dbReference>
<dbReference type="NCBIfam" id="NF004491">
    <property type="entry name" value="PRK05826.1"/>
    <property type="match status" value="1"/>
</dbReference>
<dbReference type="NCBIfam" id="NF004978">
    <property type="entry name" value="PRK06354.1"/>
    <property type="match status" value="1"/>
</dbReference>
<dbReference type="NCBIfam" id="TIGR01064">
    <property type="entry name" value="pyruv_kin"/>
    <property type="match status" value="1"/>
</dbReference>
<dbReference type="PANTHER" id="PTHR11817">
    <property type="entry name" value="PYRUVATE KINASE"/>
    <property type="match status" value="1"/>
</dbReference>
<dbReference type="Pfam" id="PF00224">
    <property type="entry name" value="PK"/>
    <property type="match status" value="1"/>
</dbReference>
<dbReference type="Pfam" id="PF02887">
    <property type="entry name" value="PK_C"/>
    <property type="match status" value="1"/>
</dbReference>
<dbReference type="PRINTS" id="PR01050">
    <property type="entry name" value="PYRUVTKNASE"/>
</dbReference>
<dbReference type="SUPFAM" id="SSF51621">
    <property type="entry name" value="Phosphoenolpyruvate/pyruvate domain"/>
    <property type="match status" value="1"/>
</dbReference>
<dbReference type="SUPFAM" id="SSF50800">
    <property type="entry name" value="PK beta-barrel domain-like"/>
    <property type="match status" value="1"/>
</dbReference>
<dbReference type="SUPFAM" id="SSF52935">
    <property type="entry name" value="PK C-terminal domain-like"/>
    <property type="match status" value="1"/>
</dbReference>
<dbReference type="PROSITE" id="PS00110">
    <property type="entry name" value="PYRUVATE_KINASE"/>
    <property type="match status" value="1"/>
</dbReference>
<accession>P30615</accession>
<comment type="catalytic activity">
    <reaction>
        <text>pyruvate + ATP = phosphoenolpyruvate + ADP + H(+)</text>
        <dbReference type="Rhea" id="RHEA:18157"/>
        <dbReference type="ChEBI" id="CHEBI:15361"/>
        <dbReference type="ChEBI" id="CHEBI:15378"/>
        <dbReference type="ChEBI" id="CHEBI:30616"/>
        <dbReference type="ChEBI" id="CHEBI:58702"/>
        <dbReference type="ChEBI" id="CHEBI:456216"/>
        <dbReference type="EC" id="2.7.1.40"/>
    </reaction>
</comment>
<comment type="cofactor">
    <cofactor>
        <name>Mg(2+)</name>
        <dbReference type="ChEBI" id="CHEBI:18420"/>
    </cofactor>
</comment>
<comment type="cofactor">
    <cofactor>
        <name>K(+)</name>
        <dbReference type="ChEBI" id="CHEBI:29103"/>
    </cofactor>
</comment>
<comment type="activity regulation">
    <text>Activated by fructose 2,6-bisphosphate, activated by the effector in a cooperative manner.</text>
</comment>
<comment type="pathway">
    <text>Carbohydrate degradation; glycolysis; pyruvate from D-glyceraldehyde 3-phosphate: step 5/5.</text>
</comment>
<comment type="subunit">
    <text evidence="1">Homotetramer.</text>
</comment>
<comment type="similarity">
    <text evidence="4">Belongs to the pyruvate kinase family.</text>
</comment>
<organism>
    <name type="scientific">Trypanosoma brucei brucei</name>
    <dbReference type="NCBI Taxonomy" id="5702"/>
    <lineage>
        <taxon>Eukaryota</taxon>
        <taxon>Discoba</taxon>
        <taxon>Euglenozoa</taxon>
        <taxon>Kinetoplastea</taxon>
        <taxon>Metakinetoplastina</taxon>
        <taxon>Trypanosomatida</taxon>
        <taxon>Trypanosomatidae</taxon>
        <taxon>Trypanosoma</taxon>
    </lineage>
</organism>
<proteinExistence type="evidence at protein level"/>
<feature type="chain" id="PRO_0000112103" description="Pyruvate kinase 1">
    <location>
        <begin position="1"/>
        <end position="499"/>
    </location>
</feature>
<feature type="binding site" evidence="1">
    <location>
        <position position="50"/>
    </location>
    <ligand>
        <name>substrate</name>
    </ligand>
</feature>
<feature type="binding site" evidence="2">
    <location>
        <begin position="52"/>
        <end position="55"/>
    </location>
    <ligand>
        <name>ATP</name>
        <dbReference type="ChEBI" id="CHEBI:30616"/>
    </ligand>
</feature>
<feature type="binding site" evidence="1">
    <location>
        <position position="52"/>
    </location>
    <ligand>
        <name>K(+)</name>
        <dbReference type="ChEBI" id="CHEBI:29103"/>
    </ligand>
</feature>
<feature type="binding site" evidence="1">
    <location>
        <position position="54"/>
    </location>
    <ligand>
        <name>K(+)</name>
        <dbReference type="ChEBI" id="CHEBI:29103"/>
    </ligand>
</feature>
<feature type="binding site" evidence="1">
    <location>
        <position position="84"/>
    </location>
    <ligand>
        <name>K(+)</name>
        <dbReference type="ChEBI" id="CHEBI:29103"/>
    </ligand>
</feature>
<feature type="binding site" evidence="1">
    <location>
        <position position="85"/>
    </location>
    <ligand>
        <name>K(+)</name>
        <dbReference type="ChEBI" id="CHEBI:29103"/>
    </ligand>
</feature>
<feature type="binding site" evidence="2">
    <location>
        <position position="91"/>
    </location>
    <ligand>
        <name>ATP</name>
        <dbReference type="ChEBI" id="CHEBI:30616"/>
    </ligand>
</feature>
<feature type="binding site" evidence="3">
    <location>
        <position position="241"/>
    </location>
    <ligand>
        <name>Mg(2+)</name>
        <dbReference type="ChEBI" id="CHEBI:18420"/>
    </ligand>
</feature>
<feature type="binding site" evidence="1">
    <location>
        <position position="264"/>
    </location>
    <ligand>
        <name>substrate</name>
    </ligand>
</feature>
<feature type="binding site" evidence="1">
    <location>
        <position position="265"/>
    </location>
    <ligand>
        <name>Mg(2+)</name>
        <dbReference type="ChEBI" id="CHEBI:18420"/>
    </ligand>
</feature>
<feature type="binding site" evidence="1">
    <location>
        <position position="265"/>
    </location>
    <ligand>
        <name>substrate</name>
    </ligand>
</feature>
<feature type="binding site" evidence="1">
    <location>
        <position position="297"/>
    </location>
    <ligand>
        <name>substrate</name>
    </ligand>
</feature>
<feature type="site" description="Transition state stabilizer" evidence="1">
    <location>
        <position position="239"/>
    </location>
</feature>
<feature type="helix" evidence="6">
    <location>
        <begin position="3"/>
        <end position="8"/>
    </location>
</feature>
<feature type="strand" evidence="5">
    <location>
        <begin position="12"/>
        <end position="14"/>
    </location>
</feature>
<feature type="strand" evidence="6">
    <location>
        <begin position="22"/>
        <end position="27"/>
    </location>
</feature>
<feature type="turn" evidence="6">
    <location>
        <begin position="30"/>
        <end position="32"/>
    </location>
</feature>
<feature type="helix" evidence="6">
    <location>
        <begin position="35"/>
        <end position="44"/>
    </location>
</feature>
<feature type="strand" evidence="6">
    <location>
        <begin position="46"/>
        <end position="52"/>
    </location>
</feature>
<feature type="helix" evidence="6">
    <location>
        <begin position="58"/>
        <end position="75"/>
    </location>
</feature>
<feature type="strand" evidence="6">
    <location>
        <begin position="80"/>
        <end position="84"/>
    </location>
</feature>
<feature type="strand" evidence="6">
    <location>
        <begin position="90"/>
        <end position="92"/>
    </location>
</feature>
<feature type="helix" evidence="6">
    <location>
        <begin position="96"/>
        <end position="98"/>
    </location>
</feature>
<feature type="strand" evidence="6">
    <location>
        <begin position="99"/>
        <end position="102"/>
    </location>
</feature>
<feature type="strand" evidence="6">
    <location>
        <begin position="107"/>
        <end position="111"/>
    </location>
</feature>
<feature type="helix" evidence="6">
    <location>
        <begin position="114"/>
        <end position="116"/>
    </location>
</feature>
<feature type="strand" evidence="6">
    <location>
        <begin position="122"/>
        <end position="128"/>
    </location>
</feature>
<feature type="helix" evidence="6">
    <location>
        <begin position="132"/>
        <end position="135"/>
    </location>
</feature>
<feature type="strand" evidence="6">
    <location>
        <begin position="141"/>
        <end position="144"/>
    </location>
</feature>
<feature type="turn" evidence="6">
    <location>
        <begin position="145"/>
        <end position="148"/>
    </location>
</feature>
<feature type="strand" evidence="6">
    <location>
        <begin position="149"/>
        <end position="158"/>
    </location>
</feature>
<feature type="strand" evidence="6">
    <location>
        <begin position="161"/>
        <end position="166"/>
    </location>
</feature>
<feature type="strand" evidence="6">
    <location>
        <begin position="170"/>
        <end position="173"/>
    </location>
</feature>
<feature type="strand" evidence="6">
    <location>
        <begin position="177"/>
        <end position="179"/>
    </location>
</feature>
<feature type="helix" evidence="6">
    <location>
        <begin position="192"/>
        <end position="204"/>
    </location>
</feature>
<feature type="strand" evidence="6">
    <location>
        <begin position="207"/>
        <end position="211"/>
    </location>
</feature>
<feature type="helix" evidence="6">
    <location>
        <begin position="217"/>
        <end position="227"/>
    </location>
</feature>
<feature type="turn" evidence="6">
    <location>
        <begin position="228"/>
        <end position="233"/>
    </location>
</feature>
<feature type="strand" evidence="6">
    <location>
        <begin position="234"/>
        <end position="240"/>
    </location>
</feature>
<feature type="helix" evidence="6">
    <location>
        <begin position="243"/>
        <end position="247"/>
    </location>
</feature>
<feature type="helix" evidence="6">
    <location>
        <begin position="249"/>
        <end position="255"/>
    </location>
</feature>
<feature type="strand" evidence="6">
    <location>
        <begin position="256"/>
        <end position="262"/>
    </location>
</feature>
<feature type="helix" evidence="6">
    <location>
        <begin position="263"/>
        <end position="269"/>
    </location>
</feature>
<feature type="helix" evidence="6">
    <location>
        <begin position="272"/>
        <end position="274"/>
    </location>
</feature>
<feature type="helix" evidence="6">
    <location>
        <begin position="275"/>
        <end position="289"/>
    </location>
</feature>
<feature type="strand" evidence="6">
    <location>
        <begin position="293"/>
        <end position="298"/>
    </location>
</feature>
<feature type="helix" evidence="6">
    <location>
        <begin position="301"/>
        <end position="304"/>
    </location>
</feature>
<feature type="strand" evidence="6">
    <location>
        <begin position="306"/>
        <end position="308"/>
    </location>
</feature>
<feature type="helix" evidence="6">
    <location>
        <begin position="311"/>
        <end position="323"/>
    </location>
</feature>
<feature type="strand" evidence="6">
    <location>
        <begin position="326"/>
        <end position="331"/>
    </location>
</feature>
<feature type="helix" evidence="6">
    <location>
        <begin position="332"/>
        <end position="335"/>
    </location>
</feature>
<feature type="helix" evidence="6">
    <location>
        <begin position="340"/>
        <end position="356"/>
    </location>
</feature>
<feature type="helix" evidence="6">
    <location>
        <begin position="362"/>
        <end position="369"/>
    </location>
</feature>
<feature type="helix" evidence="6">
    <location>
        <begin position="377"/>
        <end position="392"/>
    </location>
</feature>
<feature type="strand" evidence="6">
    <location>
        <begin position="395"/>
        <end position="400"/>
    </location>
</feature>
<feature type="strand" evidence="6">
    <location>
        <begin position="402"/>
        <end position="404"/>
    </location>
</feature>
<feature type="helix" evidence="6">
    <location>
        <begin position="405"/>
        <end position="412"/>
    </location>
</feature>
<feature type="strand" evidence="6">
    <location>
        <begin position="419"/>
        <end position="424"/>
    </location>
</feature>
<feature type="helix" evidence="6">
    <location>
        <begin position="426"/>
        <end position="431"/>
    </location>
</feature>
<feature type="helix" evidence="6">
    <location>
        <begin position="432"/>
        <end position="434"/>
    </location>
</feature>
<feature type="strand" evidence="6">
    <location>
        <begin position="438"/>
        <end position="442"/>
    </location>
</feature>
<feature type="helix" evidence="6">
    <location>
        <begin position="445"/>
        <end position="448"/>
    </location>
</feature>
<feature type="helix" evidence="6">
    <location>
        <begin position="455"/>
        <end position="467"/>
    </location>
</feature>
<feature type="strand" evidence="6">
    <location>
        <begin position="476"/>
        <end position="481"/>
    </location>
</feature>
<feature type="strand" evidence="6">
    <location>
        <begin position="492"/>
        <end position="497"/>
    </location>
</feature>
<name>KPYK1_TRYBB</name>
<gene>
    <name type="primary">PYK1</name>
</gene>
<sequence>MSQLEHNIGLSIFEPVAKHRANRIVCTIGPSTQSVEALKNLMKSGMSVARMNFSHGSHEYHQTTINNVRAAAAELGLHIGIALDTKGPEIRTGLFKDGEVSFAPGDIVCVTTDPAYEKVGTKEKFYIDYPQLTNAVRPGGSIYVDDGVMTLRVVSKEDDRTLKCHVNNHHRLTDRRGINLPGCEVDLPAVSEKDRKDLEFGVAQGVDMIFASFIRTAEQVREVRAALGEKGKDILIISKIENHQGVQNIDSIIEASNGIMVARGDLGVEIPAEKVCVAQMCIISKCNVVGKPVICATQMLESMTSNPRPTRAEVSDVANAVLNGADCVMLSGETAKGKYPNEVVQYMARICVEAQSATHDTVMFNSIKNLQKIPMCPEEAVCSSAVASAFEVQAKAMLVLSNTGRSARLISKYRPNCPIICVTTRLQTCRQLNVTRSVVSVFYDAAKSGEDKDKEKRVKLGLDFAKKEKYASTGDVVVVVHADHSVKGYPNQTRLIYLP</sequence>
<reference key="1">
    <citation type="journal article" date="1991" name="Eur. J. Biochem.">
        <title>Molecular cloning and analysis of two tandemly linked genes for pyruvate kinase of Trypanosoma brucei.</title>
        <authorList>
            <person name="Allert S."/>
            <person name="Ernest I."/>
            <person name="Poliszczak A."/>
            <person name="Opperdoes F.R."/>
            <person name="Michels P.A.M."/>
        </authorList>
    </citation>
    <scope>NUCLEOTIDE SEQUENCE [GENOMIC DNA]</scope>
    <source>
        <strain>427</strain>
    </source>
</reference>